<keyword id="KW-1048">Host nucleus</keyword>
<proteinExistence type="inferred from homology"/>
<evidence type="ECO:0000250" key="1">
    <source>
        <dbReference type="UniProtKB" id="P0DKA0"/>
    </source>
</evidence>
<evidence type="ECO:0000256" key="2">
    <source>
        <dbReference type="SAM" id="MobiDB-lite"/>
    </source>
</evidence>
<evidence type="ECO:0000305" key="3"/>
<protein>
    <recommendedName>
        <fullName>Protein E8^E2C</fullName>
    </recommendedName>
</protein>
<feature type="chain" id="PRO_0000438742" description="Protein E8^E2C">
    <location>
        <begin position="1"/>
        <end position="162"/>
    </location>
</feature>
<feature type="region of interest" description="Disordered" evidence="2">
    <location>
        <begin position="15"/>
        <end position="47"/>
    </location>
</feature>
<feature type="compositionally biased region" description="Polar residues" evidence="2">
    <location>
        <begin position="15"/>
        <end position="24"/>
    </location>
</feature>
<organismHost>
    <name type="scientific">Homo sapiens</name>
    <name type="common">Human</name>
    <dbReference type="NCBI Taxonomy" id="9606"/>
</organismHost>
<organism>
    <name type="scientific">Human papillomavirus 33</name>
    <dbReference type="NCBI Taxonomy" id="10586"/>
    <lineage>
        <taxon>Viruses</taxon>
        <taxon>Monodnaviria</taxon>
        <taxon>Shotokuvirae</taxon>
        <taxon>Cossaviricota</taxon>
        <taxon>Papovaviricetes</taxon>
        <taxon>Zurhausenvirales</taxon>
        <taxon>Papillomaviridae</taxon>
        <taxon>Firstpapillomavirinae</taxon>
        <taxon>Alphapapillomavirus</taxon>
        <taxon>Alphapapillomavirus 9</taxon>
    </lineage>
</organism>
<comment type="function">
    <text evidence="1">Plays a role in limiting the replication of viral DNA in keratinocytes. Recruits the host NCoR/SMRT complex to viral replication foci to mediate repression of both viral replication and transcription.</text>
</comment>
<comment type="subcellular location">
    <subcellularLocation>
        <location evidence="1">Host nucleus</location>
    </subcellularLocation>
</comment>
<comment type="similarity">
    <text evidence="3">Belongs to the papillomaviridae E8^E2C protein family.</text>
</comment>
<dbReference type="EMBL" id="M12732">
    <property type="status" value="NOT_ANNOTATED_CDS"/>
    <property type="molecule type" value="Genomic_DNA"/>
</dbReference>
<dbReference type="SMR" id="P0DKA2"/>
<dbReference type="Proteomes" id="UP000009118">
    <property type="component" value="Genome"/>
</dbReference>
<dbReference type="GO" id="GO:0042025">
    <property type="term" value="C:host cell nucleus"/>
    <property type="evidence" value="ECO:0007669"/>
    <property type="project" value="UniProtKB-SubCell"/>
</dbReference>
<dbReference type="GO" id="GO:0003677">
    <property type="term" value="F:DNA binding"/>
    <property type="evidence" value="ECO:0007669"/>
    <property type="project" value="InterPro"/>
</dbReference>
<dbReference type="GO" id="GO:0003700">
    <property type="term" value="F:DNA-binding transcription factor activity"/>
    <property type="evidence" value="ECO:0007669"/>
    <property type="project" value="InterPro"/>
</dbReference>
<dbReference type="GO" id="GO:0006275">
    <property type="term" value="P:regulation of DNA replication"/>
    <property type="evidence" value="ECO:0007669"/>
    <property type="project" value="InterPro"/>
</dbReference>
<dbReference type="Gene3D" id="3.30.70.330">
    <property type="match status" value="1"/>
</dbReference>
<dbReference type="InterPro" id="IPR035975">
    <property type="entry name" value="E2/EBNA1_C_sf"/>
</dbReference>
<dbReference type="InterPro" id="IPR012677">
    <property type="entry name" value="Nucleotide-bd_a/b_plait_sf"/>
</dbReference>
<dbReference type="InterPro" id="IPR000427">
    <property type="entry name" value="Papillomavirus_E2_C"/>
</dbReference>
<dbReference type="Pfam" id="PF00511">
    <property type="entry name" value="PPV_E2_C"/>
    <property type="match status" value="1"/>
</dbReference>
<dbReference type="SUPFAM" id="SSF54957">
    <property type="entry name" value="Viral DNA-binding domain"/>
    <property type="match status" value="1"/>
</dbReference>
<accession>P0DKA2</accession>
<name>VE8E2_HPV33</name>
<sequence length="162" mass="18126">MAILKWKLSSNQISTTETADIQTDNDNRPPQAAAKRRRPADTTDTAQPLTKLFCADPALDNRTARTATNCTNKQRTVCSSNVAPIVHLKGESNSLKCLRYRLKPYKELYSSMSSTWHWTSDNKNSKNGIVTVTFVTEQQQQMFLGTVKIPPTVQISTGFMTL</sequence>
<reference key="1">
    <citation type="journal article" date="1986" name="J. Virol.">
        <title>Genome organization and nucleotide sequence of human papillomavirus type 33, which is associated with cervical cancer.</title>
        <authorList>
            <person name="Cole S.T."/>
            <person name="Streeck R.E."/>
        </authorList>
    </citation>
    <scope>NUCLEOTIDE SEQUENCE [GENOMIC DNA]</scope>
</reference>